<reference key="1">
    <citation type="journal article" date="1987" name="Mol. Biochem. Parasitol.">
        <title>Possible eggshell protein gene from Schistosoma mansoni.</title>
        <authorList>
            <person name="Johnson K.S."/>
            <person name="Taylor D.W."/>
            <person name="Cordingley J.S."/>
        </authorList>
    </citation>
    <scope>NUCLEOTIDE SEQUENCE [MRNA]</scope>
</reference>
<organism>
    <name type="scientific">Schistosoma mansoni</name>
    <name type="common">Blood fluke</name>
    <dbReference type="NCBI Taxonomy" id="6183"/>
    <lineage>
        <taxon>Eukaryota</taxon>
        <taxon>Metazoa</taxon>
        <taxon>Spiralia</taxon>
        <taxon>Lophotrochozoa</taxon>
        <taxon>Platyhelminthes</taxon>
        <taxon>Trematoda</taxon>
        <taxon>Digenea</taxon>
        <taxon>Strigeidida</taxon>
        <taxon>Schistosomatoidea</taxon>
        <taxon>Schistosomatidae</taxon>
        <taxon>Schistosoma</taxon>
    </lineage>
</organism>
<proteinExistence type="evidence at transcript level"/>
<accession>P08016</accession>
<evidence type="ECO:0000256" key="1">
    <source>
        <dbReference type="SAM" id="MobiDB-lite"/>
    </source>
</evidence>
<keyword id="KW-1185">Reference proteome</keyword>
<keyword id="KW-0677">Repeat</keyword>
<feature type="chain" id="PRO_0000086943" description="Putative eggshell protein">
    <location>
        <begin position="1" status="less than"/>
        <end position="149"/>
    </location>
</feature>
<feature type="repeat" description="1">
    <location>
        <begin position="1"/>
        <end position="5"/>
    </location>
</feature>
<feature type="repeat" description="2">
    <location>
        <begin position="6"/>
        <end position="10"/>
    </location>
</feature>
<feature type="repeat" description="3">
    <location>
        <begin position="11"/>
        <end position="15"/>
    </location>
</feature>
<feature type="repeat" description="4">
    <location>
        <begin position="16"/>
        <end position="20"/>
    </location>
</feature>
<feature type="repeat" description="5">
    <location>
        <begin position="21"/>
        <end position="25"/>
    </location>
</feature>
<feature type="repeat" description="6">
    <location>
        <begin position="26"/>
        <end position="30"/>
    </location>
</feature>
<feature type="repeat" description="7; truncated">
    <location>
        <begin position="31"/>
        <end position="34"/>
    </location>
</feature>
<feature type="repeat" description="8">
    <location>
        <begin position="35"/>
        <end position="39"/>
    </location>
</feature>
<feature type="repeat" description="9">
    <location>
        <begin position="40"/>
        <end position="44"/>
    </location>
</feature>
<feature type="repeat" description="10">
    <location>
        <begin position="45"/>
        <end position="49"/>
    </location>
</feature>
<feature type="repeat" description="11; approximate">
    <location>
        <begin position="50"/>
        <end position="54"/>
    </location>
</feature>
<feature type="repeat" description="12">
    <location>
        <begin position="55"/>
        <end position="59"/>
    </location>
</feature>
<feature type="repeat" description="13; approximate">
    <location>
        <begin position="60"/>
        <end position="64"/>
    </location>
</feature>
<feature type="region of interest" description="13 X 5 AA approximate tandem repeats of Y-G-Y-[DE]-K">
    <location>
        <begin position="1"/>
        <end position="64"/>
    </location>
</feature>
<feature type="region of interest" description="Disordered" evidence="1">
    <location>
        <begin position="105"/>
        <end position="149"/>
    </location>
</feature>
<feature type="compositionally biased region" description="Basic and acidic residues" evidence="1">
    <location>
        <begin position="105"/>
        <end position="124"/>
    </location>
</feature>
<feature type="compositionally biased region" description="Basic residues" evidence="1">
    <location>
        <begin position="125"/>
        <end position="141"/>
    </location>
</feature>
<feature type="non-terminal residue">
    <location>
        <position position="1"/>
    </location>
</feature>
<dbReference type="EMBL" id="M15371">
    <property type="protein sequence ID" value="AAA29877.1"/>
    <property type="molecule type" value="mRNA"/>
</dbReference>
<dbReference type="PIR" id="A54530">
    <property type="entry name" value="A54530"/>
</dbReference>
<dbReference type="HOGENOM" id="CLU_339585_0_0_1"/>
<dbReference type="InParanoid" id="P08016"/>
<dbReference type="Proteomes" id="UP000008854">
    <property type="component" value="Unassembled WGS sequence"/>
</dbReference>
<protein>
    <recommendedName>
        <fullName>Putative eggshell protein</fullName>
    </recommendedName>
</protein>
<sequence length="149" mass="18839">YGYDKYGYDKYGYDKYGYDKYGYDKYGYEKGYDKYGYDKYGYEKYGYDKYGNEKYGYDKYGDDKHGHGKDYEKYGYTKEYSKNYKDYYKKYDKYDYGSRYEKYSYRKDHDKHDHDEHDHHDDHHDHRHHHHEHDHHHHHEHDHKNGKGY</sequence>
<name>EGGS_SCHMA</name>